<reference key="1">
    <citation type="journal article" date="2006" name="PLoS Genet.">
        <title>The complete genome sequence and comparative genome analysis of the high pathogenicity Yersinia enterocolitica strain 8081.</title>
        <authorList>
            <person name="Thomson N.R."/>
            <person name="Howard S."/>
            <person name="Wren B.W."/>
            <person name="Holden M.T.G."/>
            <person name="Crossman L."/>
            <person name="Challis G.L."/>
            <person name="Churcher C."/>
            <person name="Mungall K."/>
            <person name="Brooks K."/>
            <person name="Chillingworth T."/>
            <person name="Feltwell T."/>
            <person name="Abdellah Z."/>
            <person name="Hauser H."/>
            <person name="Jagels K."/>
            <person name="Maddison M."/>
            <person name="Moule S."/>
            <person name="Sanders M."/>
            <person name="Whitehead S."/>
            <person name="Quail M.A."/>
            <person name="Dougan G."/>
            <person name="Parkhill J."/>
            <person name="Prentice M.B."/>
        </authorList>
    </citation>
    <scope>NUCLEOTIDE SEQUENCE [LARGE SCALE GENOMIC DNA]</scope>
    <source>
        <strain>NCTC 13174 / 8081</strain>
    </source>
</reference>
<name>FDHD_YERE8</name>
<comment type="function">
    <text evidence="1">Required for formate dehydrogenase (FDH) activity. Acts as a sulfur carrier protein that transfers sulfur from IscS to the molybdenum cofactor prior to its insertion into FDH.</text>
</comment>
<comment type="subcellular location">
    <subcellularLocation>
        <location evidence="1">Cytoplasm</location>
    </subcellularLocation>
</comment>
<comment type="similarity">
    <text evidence="1">Belongs to the FdhD family.</text>
</comment>
<evidence type="ECO:0000255" key="1">
    <source>
        <dbReference type="HAMAP-Rule" id="MF_00187"/>
    </source>
</evidence>
<accession>A1JT32</accession>
<sequence>MSQIKPSDIDLSTEICGARQLNVLQRHHMAEPQLDWLAEEVPVALVYNGISHVVMMATPKDLEAFALGFSLSEGIITAPQEIYAIDVTPSCNGIEVNIELSSRRFAGLKERRRAMAGRTGCGVCGIEQLDDIFRPIAPLPFTQTFNLNQLDNALAQLKQVQTVGQLTGCTHAAAWINPQGELLGGCEDVGRHVALDKLLGVRAKQPWQQGAVLVSSRASYEMVQKTAMCGAEILFAVSAATTLAVEVAERYNLTLVGFSKPGRATVYTHPNRIQE</sequence>
<proteinExistence type="inferred from homology"/>
<organism>
    <name type="scientific">Yersinia enterocolitica serotype O:8 / biotype 1B (strain NCTC 13174 / 8081)</name>
    <dbReference type="NCBI Taxonomy" id="393305"/>
    <lineage>
        <taxon>Bacteria</taxon>
        <taxon>Pseudomonadati</taxon>
        <taxon>Pseudomonadota</taxon>
        <taxon>Gammaproteobacteria</taxon>
        <taxon>Enterobacterales</taxon>
        <taxon>Yersiniaceae</taxon>
        <taxon>Yersinia</taxon>
    </lineage>
</organism>
<gene>
    <name evidence="1" type="primary">fdhD</name>
    <name type="ordered locus">YE4137</name>
</gene>
<keyword id="KW-0963">Cytoplasm</keyword>
<keyword id="KW-0501">Molybdenum cofactor biosynthesis</keyword>
<dbReference type="EMBL" id="AM286415">
    <property type="protein sequence ID" value="CAL14153.1"/>
    <property type="molecule type" value="Genomic_DNA"/>
</dbReference>
<dbReference type="RefSeq" id="YP_001008273.1">
    <property type="nucleotide sequence ID" value="NC_008800.1"/>
</dbReference>
<dbReference type="SMR" id="A1JT32"/>
<dbReference type="KEGG" id="yen:YE4137"/>
<dbReference type="PATRIC" id="fig|393305.7.peg.4403"/>
<dbReference type="eggNOG" id="COG1526">
    <property type="taxonomic scope" value="Bacteria"/>
</dbReference>
<dbReference type="HOGENOM" id="CLU_056887_2_0_6"/>
<dbReference type="OrthoDB" id="3197277at2"/>
<dbReference type="Proteomes" id="UP000000642">
    <property type="component" value="Chromosome"/>
</dbReference>
<dbReference type="GO" id="GO:0005737">
    <property type="term" value="C:cytoplasm"/>
    <property type="evidence" value="ECO:0007669"/>
    <property type="project" value="UniProtKB-SubCell"/>
</dbReference>
<dbReference type="GO" id="GO:0097163">
    <property type="term" value="F:sulfur carrier activity"/>
    <property type="evidence" value="ECO:0007669"/>
    <property type="project" value="UniProtKB-UniRule"/>
</dbReference>
<dbReference type="GO" id="GO:0016783">
    <property type="term" value="F:sulfurtransferase activity"/>
    <property type="evidence" value="ECO:0007669"/>
    <property type="project" value="InterPro"/>
</dbReference>
<dbReference type="GO" id="GO:0006777">
    <property type="term" value="P:Mo-molybdopterin cofactor biosynthetic process"/>
    <property type="evidence" value="ECO:0007669"/>
    <property type="project" value="UniProtKB-UniRule"/>
</dbReference>
<dbReference type="Gene3D" id="3.10.20.10">
    <property type="match status" value="1"/>
</dbReference>
<dbReference type="Gene3D" id="3.40.140.10">
    <property type="entry name" value="Cytidine Deaminase, domain 2"/>
    <property type="match status" value="1"/>
</dbReference>
<dbReference type="HAMAP" id="MF_00187">
    <property type="entry name" value="FdhD"/>
    <property type="match status" value="1"/>
</dbReference>
<dbReference type="InterPro" id="IPR016193">
    <property type="entry name" value="Cytidine_deaminase-like"/>
</dbReference>
<dbReference type="InterPro" id="IPR003786">
    <property type="entry name" value="FdhD"/>
</dbReference>
<dbReference type="NCBIfam" id="TIGR00129">
    <property type="entry name" value="fdhD_narQ"/>
    <property type="match status" value="1"/>
</dbReference>
<dbReference type="PANTHER" id="PTHR30592">
    <property type="entry name" value="FORMATE DEHYDROGENASE"/>
    <property type="match status" value="1"/>
</dbReference>
<dbReference type="PANTHER" id="PTHR30592:SF1">
    <property type="entry name" value="SULFUR CARRIER PROTEIN FDHD"/>
    <property type="match status" value="1"/>
</dbReference>
<dbReference type="Pfam" id="PF02634">
    <property type="entry name" value="FdhD-NarQ"/>
    <property type="match status" value="1"/>
</dbReference>
<dbReference type="PIRSF" id="PIRSF015626">
    <property type="entry name" value="FdhD"/>
    <property type="match status" value="1"/>
</dbReference>
<dbReference type="SUPFAM" id="SSF53927">
    <property type="entry name" value="Cytidine deaminase-like"/>
    <property type="match status" value="1"/>
</dbReference>
<protein>
    <recommendedName>
        <fullName evidence="1">Sulfur carrier protein FdhD</fullName>
    </recommendedName>
</protein>
<feature type="chain" id="PRO_1000020830" description="Sulfur carrier protein FdhD">
    <location>
        <begin position="1"/>
        <end position="275"/>
    </location>
</feature>
<feature type="active site" description="Cysteine persulfide intermediate" evidence="1">
    <location>
        <position position="121"/>
    </location>
</feature>
<feature type="binding site" evidence="1">
    <location>
        <begin position="258"/>
        <end position="263"/>
    </location>
    <ligand>
        <name>Mo-bis(molybdopterin guanine dinucleotide)</name>
        <dbReference type="ChEBI" id="CHEBI:60539"/>
    </ligand>
</feature>